<keyword id="KW-0030">Aminoacyl-tRNA synthetase</keyword>
<keyword id="KW-0067">ATP-binding</keyword>
<keyword id="KW-0963">Cytoplasm</keyword>
<keyword id="KW-0436">Ligase</keyword>
<keyword id="KW-0547">Nucleotide-binding</keyword>
<keyword id="KW-0648">Protein biosynthesis</keyword>
<keyword id="KW-1185">Reference proteome</keyword>
<gene>
    <name evidence="1" type="primary">glyS</name>
    <name type="ordered locus">SF3602</name>
    <name type="ordered locus">S4166</name>
</gene>
<sequence>MSEKTFLVEIGTEELPPKALRSLAESFAANFTAELDNAGLAHGTVQWFAAPRRLALKVANLAEAQPDREIEKRGPAIAQAFDAEGKPSKAAEGWARGCGITVDQAERLTTDKGEWLLYRAHVKGESTEALLPNMVATSLAKLPIPKLMRWGASDVHFVRPVHTVTLLLGDKVIPATILGIQSDRVIRGHRFMGEPEFTIDNADQYPEILRERGKVIADYEERKAKIKADAEEAARKIGGNADLSESLLEEVASLVEWPVVLTAKFEEKFLAVPAEALVYTMKGDQKYFPVYANDGKLLPNFIFVANIESKDPQQIISGNEKVVRPRLADAEFFFNTDRKKRLEDNLPRLQTVLFQQQLGTLRDKTDRIQALAGWIAEQIGADVNHATRAGLLSKCDLMTNMVFEFTDTQGVMGMHYARHDGEAEDVAVALNEQYQPRFAGDDLPSNPVACALAIADKMDTLAGIFGIGQHPKGDKDPFALRRAALGVLRIIVEKNLNLDLQTLTEEAVRLYGDKLTNANVVDDVIDFMLGRFRAWYQDEGYTVDTIQAVLARRPTRPADFDARMKAVSHFRTLEAAAALAAANKRVSNILAKSDEVLSDRVNASTLKEPEEIKLAMQVVVLRDKLEPYFAEGRYQDALVELAELREPVDAFFDKVMVMVDDKELRLNRLTMLEKLRELFLRVADISLLQ</sequence>
<comment type="catalytic activity">
    <reaction evidence="1">
        <text>tRNA(Gly) + glycine + ATP = glycyl-tRNA(Gly) + AMP + diphosphate</text>
        <dbReference type="Rhea" id="RHEA:16013"/>
        <dbReference type="Rhea" id="RHEA-COMP:9664"/>
        <dbReference type="Rhea" id="RHEA-COMP:9683"/>
        <dbReference type="ChEBI" id="CHEBI:30616"/>
        <dbReference type="ChEBI" id="CHEBI:33019"/>
        <dbReference type="ChEBI" id="CHEBI:57305"/>
        <dbReference type="ChEBI" id="CHEBI:78442"/>
        <dbReference type="ChEBI" id="CHEBI:78522"/>
        <dbReference type="ChEBI" id="CHEBI:456215"/>
        <dbReference type="EC" id="6.1.1.14"/>
    </reaction>
</comment>
<comment type="subunit">
    <text evidence="1">Tetramer of two alpha and two beta subunits.</text>
</comment>
<comment type="subcellular location">
    <subcellularLocation>
        <location evidence="1">Cytoplasm</location>
    </subcellularLocation>
</comment>
<comment type="similarity">
    <text evidence="1">Belongs to the class-II aminoacyl-tRNA synthetase family.</text>
</comment>
<dbReference type="EC" id="6.1.1.14" evidence="1"/>
<dbReference type="EMBL" id="AE005674">
    <property type="protein sequence ID" value="AAN45052.1"/>
    <property type="molecule type" value="Genomic_DNA"/>
</dbReference>
<dbReference type="EMBL" id="AE014073">
    <property type="protein sequence ID" value="AAP19136.1"/>
    <property type="molecule type" value="Genomic_DNA"/>
</dbReference>
<dbReference type="RefSeq" id="NP_709345.1">
    <property type="nucleotide sequence ID" value="NC_004337.2"/>
</dbReference>
<dbReference type="RefSeq" id="WP_001291774.1">
    <property type="nucleotide sequence ID" value="NZ_WPGW01000060.1"/>
</dbReference>
<dbReference type="SMR" id="Q83J38"/>
<dbReference type="STRING" id="198214.SF3602"/>
<dbReference type="PaxDb" id="198214-SF3602"/>
<dbReference type="GeneID" id="1026330"/>
<dbReference type="KEGG" id="sfl:SF3602"/>
<dbReference type="KEGG" id="sfx:S4166"/>
<dbReference type="PATRIC" id="fig|198214.7.peg.4253"/>
<dbReference type="HOGENOM" id="CLU_007220_2_2_6"/>
<dbReference type="Proteomes" id="UP000001006">
    <property type="component" value="Chromosome"/>
</dbReference>
<dbReference type="Proteomes" id="UP000002673">
    <property type="component" value="Chromosome"/>
</dbReference>
<dbReference type="GO" id="GO:0005829">
    <property type="term" value="C:cytosol"/>
    <property type="evidence" value="ECO:0007669"/>
    <property type="project" value="TreeGrafter"/>
</dbReference>
<dbReference type="GO" id="GO:0004814">
    <property type="term" value="F:arginine-tRNA ligase activity"/>
    <property type="evidence" value="ECO:0007669"/>
    <property type="project" value="InterPro"/>
</dbReference>
<dbReference type="GO" id="GO:0005524">
    <property type="term" value="F:ATP binding"/>
    <property type="evidence" value="ECO:0007669"/>
    <property type="project" value="UniProtKB-UniRule"/>
</dbReference>
<dbReference type="GO" id="GO:0004820">
    <property type="term" value="F:glycine-tRNA ligase activity"/>
    <property type="evidence" value="ECO:0007669"/>
    <property type="project" value="UniProtKB-UniRule"/>
</dbReference>
<dbReference type="GO" id="GO:0006420">
    <property type="term" value="P:arginyl-tRNA aminoacylation"/>
    <property type="evidence" value="ECO:0007669"/>
    <property type="project" value="InterPro"/>
</dbReference>
<dbReference type="GO" id="GO:0006426">
    <property type="term" value="P:glycyl-tRNA aminoacylation"/>
    <property type="evidence" value="ECO:0007669"/>
    <property type="project" value="UniProtKB-UniRule"/>
</dbReference>
<dbReference type="HAMAP" id="MF_00255">
    <property type="entry name" value="Gly_tRNA_synth_beta"/>
    <property type="match status" value="1"/>
</dbReference>
<dbReference type="InterPro" id="IPR008909">
    <property type="entry name" value="DALR_anticod-bd"/>
</dbReference>
<dbReference type="InterPro" id="IPR015944">
    <property type="entry name" value="Gly-tRNA-synth_bsu"/>
</dbReference>
<dbReference type="InterPro" id="IPR006194">
    <property type="entry name" value="Gly-tRNA-synth_heterodimer"/>
</dbReference>
<dbReference type="NCBIfam" id="TIGR00211">
    <property type="entry name" value="glyS"/>
    <property type="match status" value="1"/>
</dbReference>
<dbReference type="PANTHER" id="PTHR30075:SF2">
    <property type="entry name" value="GLYCINE--TRNA LIGASE, CHLOROPLASTIC_MITOCHONDRIAL 2"/>
    <property type="match status" value="1"/>
</dbReference>
<dbReference type="PANTHER" id="PTHR30075">
    <property type="entry name" value="GLYCYL-TRNA SYNTHETASE"/>
    <property type="match status" value="1"/>
</dbReference>
<dbReference type="Pfam" id="PF05746">
    <property type="entry name" value="DALR_1"/>
    <property type="match status" value="1"/>
</dbReference>
<dbReference type="Pfam" id="PF02092">
    <property type="entry name" value="tRNA_synt_2f"/>
    <property type="match status" value="1"/>
</dbReference>
<dbReference type="PRINTS" id="PR01045">
    <property type="entry name" value="TRNASYNTHGB"/>
</dbReference>
<dbReference type="SUPFAM" id="SSF109604">
    <property type="entry name" value="HD-domain/PDEase-like"/>
    <property type="match status" value="1"/>
</dbReference>
<dbReference type="PROSITE" id="PS50861">
    <property type="entry name" value="AA_TRNA_LIGASE_II_GLYAB"/>
    <property type="match status" value="1"/>
</dbReference>
<feature type="chain" id="PRO_1000006414" description="Glycine--tRNA ligase beta subunit">
    <location>
        <begin position="1"/>
        <end position="689"/>
    </location>
</feature>
<evidence type="ECO:0000255" key="1">
    <source>
        <dbReference type="HAMAP-Rule" id="MF_00255"/>
    </source>
</evidence>
<accession>Q83J38</accession>
<accession>Q7BZ00</accession>
<protein>
    <recommendedName>
        <fullName evidence="1">Glycine--tRNA ligase beta subunit</fullName>
        <ecNumber evidence="1">6.1.1.14</ecNumber>
    </recommendedName>
    <alternativeName>
        <fullName evidence="1">Glycyl-tRNA synthetase beta subunit</fullName>
        <shortName evidence="1">GlyRS</shortName>
    </alternativeName>
</protein>
<proteinExistence type="inferred from homology"/>
<reference key="1">
    <citation type="journal article" date="2002" name="Nucleic Acids Res.">
        <title>Genome sequence of Shigella flexneri 2a: insights into pathogenicity through comparison with genomes of Escherichia coli K12 and O157.</title>
        <authorList>
            <person name="Jin Q."/>
            <person name="Yuan Z."/>
            <person name="Xu J."/>
            <person name="Wang Y."/>
            <person name="Shen Y."/>
            <person name="Lu W."/>
            <person name="Wang J."/>
            <person name="Liu H."/>
            <person name="Yang J."/>
            <person name="Yang F."/>
            <person name="Zhang X."/>
            <person name="Zhang J."/>
            <person name="Yang G."/>
            <person name="Wu H."/>
            <person name="Qu D."/>
            <person name="Dong J."/>
            <person name="Sun L."/>
            <person name="Xue Y."/>
            <person name="Zhao A."/>
            <person name="Gao Y."/>
            <person name="Zhu J."/>
            <person name="Kan B."/>
            <person name="Ding K."/>
            <person name="Chen S."/>
            <person name="Cheng H."/>
            <person name="Yao Z."/>
            <person name="He B."/>
            <person name="Chen R."/>
            <person name="Ma D."/>
            <person name="Qiang B."/>
            <person name="Wen Y."/>
            <person name="Hou Y."/>
            <person name="Yu J."/>
        </authorList>
    </citation>
    <scope>NUCLEOTIDE SEQUENCE [LARGE SCALE GENOMIC DNA]</scope>
    <source>
        <strain>301 / Serotype 2a</strain>
    </source>
</reference>
<reference key="2">
    <citation type="journal article" date="2003" name="Infect. Immun.">
        <title>Complete genome sequence and comparative genomics of Shigella flexneri serotype 2a strain 2457T.</title>
        <authorList>
            <person name="Wei J."/>
            <person name="Goldberg M.B."/>
            <person name="Burland V."/>
            <person name="Venkatesan M.M."/>
            <person name="Deng W."/>
            <person name="Fournier G."/>
            <person name="Mayhew G.F."/>
            <person name="Plunkett G. III"/>
            <person name="Rose D.J."/>
            <person name="Darling A."/>
            <person name="Mau B."/>
            <person name="Perna N.T."/>
            <person name="Payne S.M."/>
            <person name="Runyen-Janecky L.J."/>
            <person name="Zhou S."/>
            <person name="Schwartz D.C."/>
            <person name="Blattner F.R."/>
        </authorList>
    </citation>
    <scope>NUCLEOTIDE SEQUENCE [LARGE SCALE GENOMIC DNA]</scope>
    <source>
        <strain>ATCC 700930 / 2457T / Serotype 2a</strain>
    </source>
</reference>
<name>SYGB_SHIFL</name>
<organism>
    <name type="scientific">Shigella flexneri</name>
    <dbReference type="NCBI Taxonomy" id="623"/>
    <lineage>
        <taxon>Bacteria</taxon>
        <taxon>Pseudomonadati</taxon>
        <taxon>Pseudomonadota</taxon>
        <taxon>Gammaproteobacteria</taxon>
        <taxon>Enterobacterales</taxon>
        <taxon>Enterobacteriaceae</taxon>
        <taxon>Shigella</taxon>
    </lineage>
</organism>